<sequence>MWNATPSEEPEPNVTLDLDWDASPGNDSLPDELLPLFPAPLLAGVTATCVALFVVGISGNLLTMLVVSRFRELRTTTNLYLSSMAFSDLLIFLCMPLDLVRLWQYRPWNFGDLLCKLFQFVSESCTYATVLTITALSVERYFAICFPLRAKVVVTKGRVKLVILVIWAVAFCSAGPIFVLVGVEHENGTDPRDTNECRATEFAVRSGLLTVMVWVSSVFFFLPVFCLTVLYSLIGRKLWRRRGDAAVGASLRDQNHKQTVKMLAVVVFAFILCWLPFHVGRYLFSKSFEPGSLEIAQISQYCNLVSFVLFYLSAAINPILYNIMSKKYRVAVFKLLGFESFSQRKLSTLKDESSRAWTKSSINT</sequence>
<keyword id="KW-1003">Cell membrane</keyword>
<keyword id="KW-1015">Disulfide bond</keyword>
<keyword id="KW-0297">G-protein coupled receptor</keyword>
<keyword id="KW-0325">Glycoprotein</keyword>
<keyword id="KW-0472">Membrane</keyword>
<keyword id="KW-0675">Receptor</keyword>
<keyword id="KW-1185">Reference proteome</keyword>
<keyword id="KW-0807">Transducer</keyword>
<keyword id="KW-0812">Transmembrane</keyword>
<keyword id="KW-1133">Transmembrane helix</keyword>
<name>GHSR_RAT</name>
<accession>O08725</accession>
<organism>
    <name type="scientific">Rattus norvegicus</name>
    <name type="common">Rat</name>
    <dbReference type="NCBI Taxonomy" id="10116"/>
    <lineage>
        <taxon>Eukaryota</taxon>
        <taxon>Metazoa</taxon>
        <taxon>Chordata</taxon>
        <taxon>Craniata</taxon>
        <taxon>Vertebrata</taxon>
        <taxon>Euteleostomi</taxon>
        <taxon>Mammalia</taxon>
        <taxon>Eutheria</taxon>
        <taxon>Euarchontoglires</taxon>
        <taxon>Glires</taxon>
        <taxon>Rodentia</taxon>
        <taxon>Myomorpha</taxon>
        <taxon>Muroidea</taxon>
        <taxon>Muridae</taxon>
        <taxon>Murinae</taxon>
        <taxon>Rattus</taxon>
    </lineage>
</organism>
<gene>
    <name type="primary">Ghsr</name>
</gene>
<evidence type="ECO:0000250" key="1"/>
<evidence type="ECO:0000255" key="2"/>
<evidence type="ECO:0000255" key="3">
    <source>
        <dbReference type="PROSITE-ProRule" id="PRU00521"/>
    </source>
</evidence>
<evidence type="ECO:0000269" key="4">
    <source>
    </source>
</evidence>
<evidence type="ECO:0000305" key="5"/>
<feature type="chain" id="PRO_0000069482" description="Growth hormone secretagogue receptor type 1">
    <location>
        <begin position="1"/>
        <end position="364"/>
    </location>
</feature>
<feature type="topological domain" description="Extracellular" evidence="2">
    <location>
        <begin position="1"/>
        <end position="40"/>
    </location>
</feature>
<feature type="transmembrane region" description="Helical; Name=1" evidence="2">
    <location>
        <begin position="41"/>
        <end position="66"/>
    </location>
</feature>
<feature type="topological domain" description="Cytoplasmic" evidence="2">
    <location>
        <begin position="67"/>
        <end position="72"/>
    </location>
</feature>
<feature type="transmembrane region" description="Helical; Name=2" evidence="2">
    <location>
        <begin position="73"/>
        <end position="96"/>
    </location>
</feature>
<feature type="topological domain" description="Extracellular" evidence="2">
    <location>
        <begin position="97"/>
        <end position="117"/>
    </location>
</feature>
<feature type="transmembrane region" description="Helical; Name=3" evidence="2">
    <location>
        <begin position="118"/>
        <end position="139"/>
    </location>
</feature>
<feature type="topological domain" description="Cytoplasmic" evidence="2">
    <location>
        <begin position="140"/>
        <end position="162"/>
    </location>
</feature>
<feature type="transmembrane region" description="Helical; Name=4" evidence="2">
    <location>
        <begin position="163"/>
        <end position="183"/>
    </location>
</feature>
<feature type="topological domain" description="Extracellular" evidence="2">
    <location>
        <begin position="184"/>
        <end position="211"/>
    </location>
</feature>
<feature type="transmembrane region" description="Helical; Name=5" evidence="2">
    <location>
        <begin position="212"/>
        <end position="235"/>
    </location>
</feature>
<feature type="topological domain" description="Cytoplasmic" evidence="2">
    <location>
        <begin position="236"/>
        <end position="263"/>
    </location>
</feature>
<feature type="transmembrane region" description="Helical; Name=6" evidence="2">
    <location>
        <begin position="264"/>
        <end position="285"/>
    </location>
</feature>
<feature type="topological domain" description="Extracellular" evidence="2">
    <location>
        <begin position="286"/>
        <end position="302"/>
    </location>
</feature>
<feature type="transmembrane region" description="Helical; Name=7" evidence="2">
    <location>
        <begin position="303"/>
        <end position="326"/>
    </location>
</feature>
<feature type="topological domain" description="Cytoplasmic" evidence="2">
    <location>
        <begin position="327"/>
        <end position="364"/>
    </location>
</feature>
<feature type="glycosylation site" description="N-linked (GlcNAc...) asparagine" evidence="2">
    <location>
        <position position="13"/>
    </location>
</feature>
<feature type="glycosylation site" description="N-linked (GlcNAc...) asparagine" evidence="2">
    <location>
        <position position="26"/>
    </location>
</feature>
<feature type="glycosylation site" description="N-linked (GlcNAc...) asparagine" evidence="2">
    <location>
        <position position="187"/>
    </location>
</feature>
<feature type="disulfide bond" evidence="3">
    <location>
        <begin position="115"/>
        <end position="197"/>
    </location>
</feature>
<proteinExistence type="evidence at transcript level"/>
<protein>
    <recommendedName>
        <fullName>Growth hormone secretagogue receptor type 1</fullName>
        <shortName>GHS-R</shortName>
    </recommendedName>
    <alternativeName>
        <fullName>GH-releasing peptide receptor</fullName>
        <shortName>GHRP</shortName>
    </alternativeName>
    <alternativeName>
        <fullName>Ghrelin receptor</fullName>
    </alternativeName>
</protein>
<dbReference type="EMBL" id="U94321">
    <property type="protein sequence ID" value="AAC53156.1"/>
    <property type="molecule type" value="mRNA"/>
</dbReference>
<dbReference type="EMBL" id="AB001982">
    <property type="protein sequence ID" value="BAA21777.1"/>
    <property type="status" value="ALT_INIT"/>
    <property type="molecule type" value="mRNA"/>
</dbReference>
<dbReference type="RefSeq" id="NP_114464.1">
    <property type="nucleotide sequence ID" value="NM_032075.3"/>
</dbReference>
<dbReference type="RefSeq" id="XP_017446630.1">
    <property type="nucleotide sequence ID" value="XM_017591141.1"/>
</dbReference>
<dbReference type="RefSeq" id="XP_017446631.1">
    <property type="nucleotide sequence ID" value="XM_017591142.1"/>
</dbReference>
<dbReference type="RefSeq" id="XP_063138711.1">
    <property type="nucleotide sequence ID" value="XM_063282641.1"/>
</dbReference>
<dbReference type="RefSeq" id="XP_063138712.1">
    <property type="nucleotide sequence ID" value="XM_063282642.1"/>
</dbReference>
<dbReference type="SMR" id="O08725"/>
<dbReference type="BioGRID" id="249888">
    <property type="interactions" value="1"/>
</dbReference>
<dbReference type="FunCoup" id="O08725">
    <property type="interactions" value="168"/>
</dbReference>
<dbReference type="IntAct" id="O08725">
    <property type="interactions" value="1"/>
</dbReference>
<dbReference type="STRING" id="10116.ENSRNOP00000038418"/>
<dbReference type="BindingDB" id="O08725"/>
<dbReference type="ChEMBL" id="CHEMBL3278"/>
<dbReference type="DrugCentral" id="O08725"/>
<dbReference type="GuidetoPHARMACOLOGY" id="246"/>
<dbReference type="GlyCosmos" id="O08725">
    <property type="glycosylation" value="3 sites, No reported glycans"/>
</dbReference>
<dbReference type="GlyGen" id="O08725">
    <property type="glycosylation" value="3 sites"/>
</dbReference>
<dbReference type="PhosphoSitePlus" id="O08725"/>
<dbReference type="PaxDb" id="10116-ENSRNOP00000038418"/>
<dbReference type="Ensembl" id="ENSRNOT00000034960.2">
    <property type="protein sequence ID" value="ENSRNOP00000038418.1"/>
    <property type="gene ID" value="ENSRNOG00000024119.2"/>
</dbReference>
<dbReference type="GeneID" id="84022"/>
<dbReference type="KEGG" id="rno:84022"/>
<dbReference type="UCSC" id="RGD:621397">
    <property type="organism name" value="rat"/>
</dbReference>
<dbReference type="AGR" id="RGD:621397"/>
<dbReference type="CTD" id="2693"/>
<dbReference type="RGD" id="621397">
    <property type="gene designation" value="Ghsr"/>
</dbReference>
<dbReference type="eggNOG" id="KOG3656">
    <property type="taxonomic scope" value="Eukaryota"/>
</dbReference>
<dbReference type="GeneTree" id="ENSGT01130000278335"/>
<dbReference type="HOGENOM" id="CLU_009579_6_5_1"/>
<dbReference type="InParanoid" id="O08725"/>
<dbReference type="OMA" id="IGNLMTM"/>
<dbReference type="OrthoDB" id="24829at9989"/>
<dbReference type="PhylomeDB" id="O08725"/>
<dbReference type="TreeFam" id="TF332184"/>
<dbReference type="Reactome" id="R-RNO-416476">
    <property type="pathway name" value="G alpha (q) signalling events"/>
</dbReference>
<dbReference type="PRO" id="PR:O08725"/>
<dbReference type="Proteomes" id="UP000002494">
    <property type="component" value="Chromosome 2"/>
</dbReference>
<dbReference type="Bgee" id="ENSRNOG00000024119">
    <property type="expression patterns" value="Expressed in testis and 1 other cell type or tissue"/>
</dbReference>
<dbReference type="GO" id="GO:0009986">
    <property type="term" value="C:cell surface"/>
    <property type="evidence" value="ECO:0000250"/>
    <property type="project" value="HGNC-UCL"/>
</dbReference>
<dbReference type="GO" id="GO:0098978">
    <property type="term" value="C:glutamatergic synapse"/>
    <property type="evidence" value="ECO:0000314"/>
    <property type="project" value="SynGO"/>
</dbReference>
<dbReference type="GO" id="GO:0045121">
    <property type="term" value="C:membrane raft"/>
    <property type="evidence" value="ECO:0000250"/>
    <property type="project" value="UniProtKB"/>
</dbReference>
<dbReference type="GO" id="GO:0043005">
    <property type="term" value="C:neuron projection"/>
    <property type="evidence" value="ECO:0000250"/>
    <property type="project" value="UniProtKB"/>
</dbReference>
<dbReference type="GO" id="GO:0005886">
    <property type="term" value="C:plasma membrane"/>
    <property type="evidence" value="ECO:0000318"/>
    <property type="project" value="GO_Central"/>
</dbReference>
<dbReference type="GO" id="GO:0098794">
    <property type="term" value="C:postsynapse"/>
    <property type="evidence" value="ECO:0007669"/>
    <property type="project" value="GOC"/>
</dbReference>
<dbReference type="GO" id="GO:0098685">
    <property type="term" value="C:Schaffer collateral - CA1 synapse"/>
    <property type="evidence" value="ECO:0000314"/>
    <property type="project" value="SynGO"/>
</dbReference>
<dbReference type="GO" id="GO:0097060">
    <property type="term" value="C:synaptic membrane"/>
    <property type="evidence" value="ECO:0000314"/>
    <property type="project" value="SynGO"/>
</dbReference>
<dbReference type="GO" id="GO:0004930">
    <property type="term" value="F:G protein-coupled receptor activity"/>
    <property type="evidence" value="ECO:0000250"/>
    <property type="project" value="UniProtKB"/>
</dbReference>
<dbReference type="GO" id="GO:0005131">
    <property type="term" value="F:growth hormone receptor binding"/>
    <property type="evidence" value="ECO:0000304"/>
    <property type="project" value="RGD"/>
</dbReference>
<dbReference type="GO" id="GO:0001616">
    <property type="term" value="F:growth hormone secretagogue receptor activity"/>
    <property type="evidence" value="ECO:0000314"/>
    <property type="project" value="RGD"/>
</dbReference>
<dbReference type="GO" id="GO:0016520">
    <property type="term" value="F:growth hormone-releasing hormone receptor activity"/>
    <property type="evidence" value="ECO:0000250"/>
    <property type="project" value="HGNC-UCL"/>
</dbReference>
<dbReference type="GO" id="GO:0042562">
    <property type="term" value="F:hormone binding"/>
    <property type="evidence" value="ECO:0000353"/>
    <property type="project" value="UniProtKB"/>
</dbReference>
<dbReference type="GO" id="GO:0017046">
    <property type="term" value="F:peptide hormone binding"/>
    <property type="evidence" value="ECO:0000315"/>
    <property type="project" value="RGD"/>
</dbReference>
<dbReference type="GO" id="GO:0008154">
    <property type="term" value="P:actin polymerization or depolymerization"/>
    <property type="evidence" value="ECO:0000250"/>
    <property type="project" value="UniProtKB"/>
</dbReference>
<dbReference type="GO" id="GO:0008343">
    <property type="term" value="P:adult feeding behavior"/>
    <property type="evidence" value="ECO:0000250"/>
    <property type="project" value="HGNC-UCL"/>
</dbReference>
<dbReference type="GO" id="GO:0032869">
    <property type="term" value="P:cellular response to insulin stimulus"/>
    <property type="evidence" value="ECO:0000266"/>
    <property type="project" value="RGD"/>
</dbReference>
<dbReference type="GO" id="GO:1990314">
    <property type="term" value="P:cellular response to insulin-like growth factor stimulus"/>
    <property type="evidence" value="ECO:0000270"/>
    <property type="project" value="RGD"/>
</dbReference>
<dbReference type="GO" id="GO:0071222">
    <property type="term" value="P:cellular response to lipopolysaccharide"/>
    <property type="evidence" value="ECO:0000270"/>
    <property type="project" value="RGD"/>
</dbReference>
<dbReference type="GO" id="GO:0097067">
    <property type="term" value="P:cellular response to thyroid hormone stimulus"/>
    <property type="evidence" value="ECO:0000270"/>
    <property type="project" value="RGD"/>
</dbReference>
<dbReference type="GO" id="GO:0046697">
    <property type="term" value="P:decidualization"/>
    <property type="evidence" value="ECO:0000250"/>
    <property type="project" value="UniProtKB"/>
</dbReference>
<dbReference type="GO" id="GO:0007565">
    <property type="term" value="P:female pregnancy"/>
    <property type="evidence" value="ECO:0000270"/>
    <property type="project" value="RGD"/>
</dbReference>
<dbReference type="GO" id="GO:0007186">
    <property type="term" value="P:G protein-coupled receptor signaling pathway"/>
    <property type="evidence" value="ECO:0000314"/>
    <property type="project" value="RGD"/>
</dbReference>
<dbReference type="GO" id="GO:0036321">
    <property type="term" value="P:ghrelin secretion"/>
    <property type="evidence" value="ECO:0000315"/>
    <property type="project" value="RGD"/>
</dbReference>
<dbReference type="GO" id="GO:0030252">
    <property type="term" value="P:growth hormone secretion"/>
    <property type="evidence" value="ECO:0000266"/>
    <property type="project" value="RGD"/>
</dbReference>
<dbReference type="GO" id="GO:0009755">
    <property type="term" value="P:hormone-mediated signaling pathway"/>
    <property type="evidence" value="ECO:0000250"/>
    <property type="project" value="HGNC-UCL"/>
</dbReference>
<dbReference type="GO" id="GO:0048009">
    <property type="term" value="P:insulin-like growth factor receptor signaling pathway"/>
    <property type="evidence" value="ECO:0000266"/>
    <property type="project" value="RGD"/>
</dbReference>
<dbReference type="GO" id="GO:0007611">
    <property type="term" value="P:learning or memory"/>
    <property type="evidence" value="ECO:0000314"/>
    <property type="project" value="RGD"/>
</dbReference>
<dbReference type="GO" id="GO:0032099">
    <property type="term" value="P:negative regulation of appetite"/>
    <property type="evidence" value="ECO:0000315"/>
    <property type="project" value="RGD"/>
</dbReference>
<dbReference type="GO" id="GO:0050728">
    <property type="term" value="P:negative regulation of inflammatory response"/>
    <property type="evidence" value="ECO:0000250"/>
    <property type="project" value="UniProtKB"/>
</dbReference>
<dbReference type="GO" id="GO:0046676">
    <property type="term" value="P:negative regulation of insulin secretion"/>
    <property type="evidence" value="ECO:0000314"/>
    <property type="project" value="MGI"/>
</dbReference>
<dbReference type="GO" id="GO:0032691">
    <property type="term" value="P:negative regulation of interleukin-1 beta production"/>
    <property type="evidence" value="ECO:0000250"/>
    <property type="project" value="UniProtKB"/>
</dbReference>
<dbReference type="GO" id="GO:0032715">
    <property type="term" value="P:negative regulation of interleukin-6 production"/>
    <property type="evidence" value="ECO:0000250"/>
    <property type="project" value="UniProtKB"/>
</dbReference>
<dbReference type="GO" id="GO:0090327">
    <property type="term" value="P:negative regulation of locomotion involved in locomotory behavior"/>
    <property type="evidence" value="ECO:0000315"/>
    <property type="project" value="RGD"/>
</dbReference>
<dbReference type="GO" id="GO:2000110">
    <property type="term" value="P:negative regulation of macrophage apoptotic process"/>
    <property type="evidence" value="ECO:0000315"/>
    <property type="project" value="RGD"/>
</dbReference>
<dbReference type="GO" id="GO:0010700">
    <property type="term" value="P:negative regulation of norepinephrine secretion"/>
    <property type="evidence" value="ECO:0000315"/>
    <property type="project" value="RGD"/>
</dbReference>
<dbReference type="GO" id="GO:0032720">
    <property type="term" value="P:negative regulation of tumor necrosis factor production"/>
    <property type="evidence" value="ECO:0000315"/>
    <property type="project" value="RGD"/>
</dbReference>
<dbReference type="GO" id="GO:0032100">
    <property type="term" value="P:positive regulation of appetite"/>
    <property type="evidence" value="ECO:0000250"/>
    <property type="project" value="HGNC-UCL"/>
</dbReference>
<dbReference type="GO" id="GO:1904000">
    <property type="term" value="P:positive regulation of eating behavior"/>
    <property type="evidence" value="ECO:0000315"/>
    <property type="project" value="RGD"/>
</dbReference>
<dbReference type="GO" id="GO:0045923">
    <property type="term" value="P:positive regulation of fatty acid metabolic process"/>
    <property type="evidence" value="ECO:0000315"/>
    <property type="project" value="RGD"/>
</dbReference>
<dbReference type="GO" id="GO:0045927">
    <property type="term" value="P:positive regulation of growth"/>
    <property type="evidence" value="ECO:0000315"/>
    <property type="project" value="RGD"/>
</dbReference>
<dbReference type="GO" id="GO:0043568">
    <property type="term" value="P:positive regulation of insulin-like growth factor receptor signaling pathway"/>
    <property type="evidence" value="ECO:0000266"/>
    <property type="project" value="RGD"/>
</dbReference>
<dbReference type="GO" id="GO:0040018">
    <property type="term" value="P:positive regulation of multicellular organism growth"/>
    <property type="evidence" value="ECO:0000250"/>
    <property type="project" value="HGNC-UCL"/>
</dbReference>
<dbReference type="GO" id="GO:0120058">
    <property type="term" value="P:positive regulation of small intestinal transit"/>
    <property type="evidence" value="ECO:0000315"/>
    <property type="project" value="RGD"/>
</dbReference>
<dbReference type="GO" id="GO:1904349">
    <property type="term" value="P:positive regulation of small intestine smooth muscle contraction"/>
    <property type="evidence" value="ECO:0000315"/>
    <property type="project" value="RGD"/>
</dbReference>
<dbReference type="GO" id="GO:1903672">
    <property type="term" value="P:positive regulation of sprouting angiogenesis"/>
    <property type="evidence" value="ECO:0000315"/>
    <property type="project" value="RGD"/>
</dbReference>
<dbReference type="GO" id="GO:1905564">
    <property type="term" value="P:positive regulation of vascular endothelial cell proliferation"/>
    <property type="evidence" value="ECO:0000315"/>
    <property type="project" value="RGD"/>
</dbReference>
<dbReference type="GO" id="GO:0099170">
    <property type="term" value="P:postsynaptic modulation of chemical synaptic transmission"/>
    <property type="evidence" value="ECO:0000314"/>
    <property type="project" value="SynGO"/>
</dbReference>
<dbReference type="GO" id="GO:0060259">
    <property type="term" value="P:regulation of feeding behavior"/>
    <property type="evidence" value="ECO:0000315"/>
    <property type="project" value="RGD"/>
</dbReference>
<dbReference type="GO" id="GO:1905333">
    <property type="term" value="P:regulation of gastric motility"/>
    <property type="evidence" value="ECO:0000315"/>
    <property type="project" value="RGD"/>
</dbReference>
<dbReference type="GO" id="GO:0060123">
    <property type="term" value="P:regulation of growth hormone secretion"/>
    <property type="evidence" value="ECO:0000315"/>
    <property type="project" value="RGD"/>
</dbReference>
<dbReference type="GO" id="GO:0043134">
    <property type="term" value="P:regulation of hindgut contraction"/>
    <property type="evidence" value="ECO:0000315"/>
    <property type="project" value="RGD"/>
</dbReference>
<dbReference type="GO" id="GO:0098696">
    <property type="term" value="P:regulation of neurotransmitter receptor localization to postsynaptic specialization membrane"/>
    <property type="evidence" value="ECO:0000314"/>
    <property type="project" value="SynGO"/>
</dbReference>
<dbReference type="GO" id="GO:0099175">
    <property type="term" value="P:regulation of postsynapse organization"/>
    <property type="evidence" value="ECO:0000314"/>
    <property type="project" value="SynGO"/>
</dbReference>
<dbReference type="GO" id="GO:0051963">
    <property type="term" value="P:regulation of synapse assembly"/>
    <property type="evidence" value="ECO:0000266"/>
    <property type="project" value="RGD"/>
</dbReference>
<dbReference type="GO" id="GO:0051969">
    <property type="term" value="P:regulation of transmission of nerve impulse"/>
    <property type="evidence" value="ECO:0000315"/>
    <property type="project" value="RGD"/>
</dbReference>
<dbReference type="GO" id="GO:0071548">
    <property type="term" value="P:response to dexamethasone"/>
    <property type="evidence" value="ECO:0000270"/>
    <property type="project" value="RGD"/>
</dbReference>
<dbReference type="GO" id="GO:0032355">
    <property type="term" value="P:response to estradiol"/>
    <property type="evidence" value="ECO:0000270"/>
    <property type="project" value="RGD"/>
</dbReference>
<dbReference type="GO" id="GO:0032354">
    <property type="term" value="P:response to follicle-stimulating hormone"/>
    <property type="evidence" value="ECO:0000270"/>
    <property type="project" value="RGD"/>
</dbReference>
<dbReference type="GO" id="GO:0032094">
    <property type="term" value="P:response to food"/>
    <property type="evidence" value="ECO:0000266"/>
    <property type="project" value="RGD"/>
</dbReference>
<dbReference type="GO" id="GO:0060416">
    <property type="term" value="P:response to growth hormone"/>
    <property type="evidence" value="ECO:0000270"/>
    <property type="project" value="RGD"/>
</dbReference>
<dbReference type="GO" id="GO:0009725">
    <property type="term" value="P:response to hormone"/>
    <property type="evidence" value="ECO:0000250"/>
    <property type="project" value="UniProtKB"/>
</dbReference>
<dbReference type="GO" id="GO:1902065">
    <property type="term" value="P:response to L-glutamate"/>
    <property type="evidence" value="ECO:0000270"/>
    <property type="project" value="RGD"/>
</dbReference>
<dbReference type="GO" id="GO:0007283">
    <property type="term" value="P:spermatogenesis"/>
    <property type="evidence" value="ECO:0000270"/>
    <property type="project" value="RGD"/>
</dbReference>
<dbReference type="CDD" id="cd15131">
    <property type="entry name" value="7tmA_GHSR"/>
    <property type="match status" value="1"/>
</dbReference>
<dbReference type="FunFam" id="1.20.1070.10:FF:000125">
    <property type="entry name" value="growth hormone secretagogue receptor type 1"/>
    <property type="match status" value="1"/>
</dbReference>
<dbReference type="Gene3D" id="1.20.1070.10">
    <property type="entry name" value="Rhodopsin 7-helix transmembrane proteins"/>
    <property type="match status" value="1"/>
</dbReference>
<dbReference type="InterPro" id="IPR003905">
    <property type="entry name" value="GHS-R/MTLR"/>
</dbReference>
<dbReference type="InterPro" id="IPR000276">
    <property type="entry name" value="GPCR_Rhodpsn"/>
</dbReference>
<dbReference type="InterPro" id="IPR017452">
    <property type="entry name" value="GPCR_Rhodpsn_7TM"/>
</dbReference>
<dbReference type="PANTHER" id="PTHR24243">
    <property type="entry name" value="G-PROTEIN COUPLED RECEPTOR"/>
    <property type="match status" value="1"/>
</dbReference>
<dbReference type="PANTHER" id="PTHR24243:SF7">
    <property type="entry name" value="GROWTH HORMONE SECRETAGOGUE RECEPTOR TYPE 1"/>
    <property type="match status" value="1"/>
</dbReference>
<dbReference type="Pfam" id="PF00001">
    <property type="entry name" value="7tm_1"/>
    <property type="match status" value="1"/>
</dbReference>
<dbReference type="PRINTS" id="PR01417">
    <property type="entry name" value="GHSRECEPTOR"/>
</dbReference>
<dbReference type="PRINTS" id="PR00237">
    <property type="entry name" value="GPCRRHODOPSN"/>
</dbReference>
<dbReference type="SUPFAM" id="SSF81321">
    <property type="entry name" value="Family A G protein-coupled receptor-like"/>
    <property type="match status" value="1"/>
</dbReference>
<dbReference type="PROSITE" id="PS00237">
    <property type="entry name" value="G_PROTEIN_RECEP_F1_1"/>
    <property type="match status" value="1"/>
</dbReference>
<dbReference type="PROSITE" id="PS50262">
    <property type="entry name" value="G_PROTEIN_RECEP_F1_2"/>
    <property type="match status" value="1"/>
</dbReference>
<reference key="1">
    <citation type="journal article" date="1997" name="Mol. Endocrinol.">
        <title>Molecular analysis of rat pituitary and hypothalamic growth hormone secretagogue receptors.</title>
        <authorList>
            <person name="McKee K.K."/>
            <person name="Palyha O.C."/>
            <person name="Feighner S.D."/>
            <person name="Hreniuk D.L."/>
            <person name="Tan C.P."/>
            <person name="Phillips M.S."/>
            <person name="Smith R.G."/>
            <person name="der Ploeg L.H.T."/>
            <person name="Howard A.D."/>
        </authorList>
    </citation>
    <scope>NUCLEOTIDE SEQUENCE [MRNA]</scope>
    <source>
        <tissue>Pituitary</tissue>
    </source>
</reference>
<reference key="2">
    <citation type="journal article" date="1998" name="Peptides">
        <title>Molecular cloning and gene expression of growth hormone-releasing peptide receptor in rat tissues.</title>
        <authorList>
            <person name="Yokote R."/>
            <person name="Sato M."/>
            <person name="Matsubara S."/>
            <person name="Ohye H."/>
            <person name="Niimi M."/>
            <person name="Murao K."/>
            <person name="Takahara J."/>
        </authorList>
    </citation>
    <scope>NUCLEOTIDE SEQUENCE [MRNA] OF 1-240</scope>
    <source>
        <strain>Wistar</strain>
        <tissue>Pituitary</tissue>
    </source>
</reference>
<reference key="3">
    <citation type="journal article" date="1999" name="Nature">
        <title>Ghrelin is a growth-hormone-releasing acylated peptide from stomach.</title>
        <authorList>
            <person name="Kojima M."/>
            <person name="Hosoda H."/>
            <person name="Date Y."/>
            <person name="Nakazato M."/>
            <person name="Matsuo H."/>
            <person name="Kangawa K."/>
        </authorList>
    </citation>
    <scope>FUNCTION</scope>
</reference>
<comment type="function">
    <text evidence="1 4">Receptor for ghrelin, coupled to G-alpha-11 proteins. Stimulates growth hormone secretion. Also binds other growth hormone releasing peptides (GHRP) (e.g. Met-enkephalin and GHRP-6) as well as non-peptide, low molecular weight secretagogues (e.g. L-692,429, MK-0677, adenosine) (By similarity).</text>
</comment>
<comment type="subcellular location">
    <subcellularLocation>
        <location>Cell membrane</location>
        <topology>Multi-pass membrane protein</topology>
    </subcellularLocation>
</comment>
<comment type="similarity">
    <text evidence="3">Belongs to the G-protein coupled receptor 1 family.</text>
</comment>
<comment type="sequence caution" evidence="5">
    <conflict type="erroneous initiation">
        <sequence resource="EMBL-CDS" id="BAA21777"/>
    </conflict>
</comment>